<reference key="1">
    <citation type="journal article" date="2009" name="Proc. Natl. Acad. Sci. U.S.A.">
        <title>The genomic basis of trophic strategy in marine bacteria.</title>
        <authorList>
            <person name="Lauro F.M."/>
            <person name="McDougald D."/>
            <person name="Thomas T."/>
            <person name="Williams T.J."/>
            <person name="Egan S."/>
            <person name="Rice S."/>
            <person name="DeMaere M.Z."/>
            <person name="Ting L."/>
            <person name="Ertan H."/>
            <person name="Johnson J."/>
            <person name="Ferriera S."/>
            <person name="Lapidus A."/>
            <person name="Anderson I."/>
            <person name="Kyrpides N."/>
            <person name="Munk A.C."/>
            <person name="Detter C."/>
            <person name="Han C.S."/>
            <person name="Brown M.V."/>
            <person name="Robb F.T."/>
            <person name="Kjelleberg S."/>
            <person name="Cavicchioli R."/>
        </authorList>
    </citation>
    <scope>NUCLEOTIDE SEQUENCE [LARGE SCALE GENOMIC DNA]</scope>
    <source>
        <strain>DSM 13593 / LMG 18877 / RB2256</strain>
    </source>
</reference>
<comment type="function">
    <text evidence="1">Cleaves peptides in various proteins in a process that requires ATP hydrolysis. Has a chymotrypsin-like activity. Plays a major role in the degradation of misfolded proteins.</text>
</comment>
<comment type="catalytic activity">
    <reaction evidence="1">
        <text>Hydrolysis of proteins to small peptides in the presence of ATP and magnesium. alpha-casein is the usual test substrate. In the absence of ATP, only oligopeptides shorter than five residues are hydrolyzed (such as succinyl-Leu-Tyr-|-NHMec, and Leu-Tyr-Leu-|-Tyr-Trp, in which cleavage of the -Tyr-|-Leu- and -Tyr-|-Trp bonds also occurs).</text>
        <dbReference type="EC" id="3.4.21.92"/>
    </reaction>
</comment>
<comment type="subunit">
    <text evidence="1">Fourteen ClpP subunits assemble into 2 heptameric rings which stack back to back to give a disk-like structure with a central cavity, resembling the structure of eukaryotic proteasomes.</text>
</comment>
<comment type="subcellular location">
    <subcellularLocation>
        <location evidence="1">Cytoplasm</location>
    </subcellularLocation>
</comment>
<comment type="similarity">
    <text evidence="1">Belongs to the peptidase S14 family.</text>
</comment>
<accession>Q1GPH5</accession>
<name>CLPP_SPHAL</name>
<keyword id="KW-0963">Cytoplasm</keyword>
<keyword id="KW-0378">Hydrolase</keyword>
<keyword id="KW-0645">Protease</keyword>
<keyword id="KW-1185">Reference proteome</keyword>
<keyword id="KW-0720">Serine protease</keyword>
<organism>
    <name type="scientific">Sphingopyxis alaskensis (strain DSM 13593 / LMG 18877 / RB2256)</name>
    <name type="common">Sphingomonas alaskensis</name>
    <dbReference type="NCBI Taxonomy" id="317655"/>
    <lineage>
        <taxon>Bacteria</taxon>
        <taxon>Pseudomonadati</taxon>
        <taxon>Pseudomonadota</taxon>
        <taxon>Alphaproteobacteria</taxon>
        <taxon>Sphingomonadales</taxon>
        <taxon>Sphingomonadaceae</taxon>
        <taxon>Sphingopyxis</taxon>
    </lineage>
</organism>
<dbReference type="EC" id="3.4.21.92" evidence="1"/>
<dbReference type="EMBL" id="CP000356">
    <property type="protein sequence ID" value="ABF54447.1"/>
    <property type="molecule type" value="Genomic_DNA"/>
</dbReference>
<dbReference type="RefSeq" id="WP_011543012.1">
    <property type="nucleotide sequence ID" value="NC_008048.1"/>
</dbReference>
<dbReference type="SMR" id="Q1GPH5"/>
<dbReference type="STRING" id="317655.Sala_2742"/>
<dbReference type="MEROPS" id="S14.001"/>
<dbReference type="KEGG" id="sal:Sala_2742"/>
<dbReference type="eggNOG" id="COG0740">
    <property type="taxonomic scope" value="Bacteria"/>
</dbReference>
<dbReference type="HOGENOM" id="CLU_058707_3_2_5"/>
<dbReference type="OrthoDB" id="9802800at2"/>
<dbReference type="Proteomes" id="UP000006578">
    <property type="component" value="Chromosome"/>
</dbReference>
<dbReference type="GO" id="GO:0005737">
    <property type="term" value="C:cytoplasm"/>
    <property type="evidence" value="ECO:0007669"/>
    <property type="project" value="UniProtKB-SubCell"/>
</dbReference>
<dbReference type="GO" id="GO:0009368">
    <property type="term" value="C:endopeptidase Clp complex"/>
    <property type="evidence" value="ECO:0007669"/>
    <property type="project" value="TreeGrafter"/>
</dbReference>
<dbReference type="GO" id="GO:0004176">
    <property type="term" value="F:ATP-dependent peptidase activity"/>
    <property type="evidence" value="ECO:0007669"/>
    <property type="project" value="InterPro"/>
</dbReference>
<dbReference type="GO" id="GO:0051117">
    <property type="term" value="F:ATPase binding"/>
    <property type="evidence" value="ECO:0007669"/>
    <property type="project" value="TreeGrafter"/>
</dbReference>
<dbReference type="GO" id="GO:0004252">
    <property type="term" value="F:serine-type endopeptidase activity"/>
    <property type="evidence" value="ECO:0007669"/>
    <property type="project" value="UniProtKB-UniRule"/>
</dbReference>
<dbReference type="GO" id="GO:0006515">
    <property type="term" value="P:protein quality control for misfolded or incompletely synthesized proteins"/>
    <property type="evidence" value="ECO:0007669"/>
    <property type="project" value="TreeGrafter"/>
</dbReference>
<dbReference type="CDD" id="cd07017">
    <property type="entry name" value="S14_ClpP_2"/>
    <property type="match status" value="1"/>
</dbReference>
<dbReference type="FunFam" id="3.90.226.10:FF:000001">
    <property type="entry name" value="ATP-dependent Clp protease proteolytic subunit"/>
    <property type="match status" value="1"/>
</dbReference>
<dbReference type="Gene3D" id="3.90.226.10">
    <property type="entry name" value="2-enoyl-CoA Hydratase, Chain A, domain 1"/>
    <property type="match status" value="1"/>
</dbReference>
<dbReference type="HAMAP" id="MF_00444">
    <property type="entry name" value="ClpP"/>
    <property type="match status" value="1"/>
</dbReference>
<dbReference type="InterPro" id="IPR001907">
    <property type="entry name" value="ClpP"/>
</dbReference>
<dbReference type="InterPro" id="IPR029045">
    <property type="entry name" value="ClpP/crotonase-like_dom_sf"/>
</dbReference>
<dbReference type="InterPro" id="IPR023562">
    <property type="entry name" value="ClpP/TepA"/>
</dbReference>
<dbReference type="InterPro" id="IPR018215">
    <property type="entry name" value="ClpP_Ser_AS"/>
</dbReference>
<dbReference type="NCBIfam" id="NF001368">
    <property type="entry name" value="PRK00277.1"/>
    <property type="match status" value="1"/>
</dbReference>
<dbReference type="NCBIfam" id="NF009205">
    <property type="entry name" value="PRK12553.1"/>
    <property type="match status" value="1"/>
</dbReference>
<dbReference type="PANTHER" id="PTHR10381">
    <property type="entry name" value="ATP-DEPENDENT CLP PROTEASE PROTEOLYTIC SUBUNIT"/>
    <property type="match status" value="1"/>
</dbReference>
<dbReference type="PANTHER" id="PTHR10381:SF11">
    <property type="entry name" value="ATP-DEPENDENT CLP PROTEASE PROTEOLYTIC SUBUNIT, MITOCHONDRIAL"/>
    <property type="match status" value="1"/>
</dbReference>
<dbReference type="Pfam" id="PF00574">
    <property type="entry name" value="CLP_protease"/>
    <property type="match status" value="1"/>
</dbReference>
<dbReference type="PRINTS" id="PR00127">
    <property type="entry name" value="CLPPROTEASEP"/>
</dbReference>
<dbReference type="SUPFAM" id="SSF52096">
    <property type="entry name" value="ClpP/crotonase"/>
    <property type="match status" value="1"/>
</dbReference>
<dbReference type="PROSITE" id="PS00381">
    <property type="entry name" value="CLP_PROTEASE_SER"/>
    <property type="match status" value="1"/>
</dbReference>
<sequence length="216" mass="23814">MIDPLAALVPVVVEQTSRGERSFDIFSRLLRERIVFVTGEVEDNMASLIVAQLLFLESENPKKDIYMYINSPGGVVTAGMAIHDTMQYIRPRVGTVCIGQAASMGSFLLAAGEPGMRVALTNARVMVHQPSGGARGMASDIEIQAKEILRIRKRMNDLYVKYTGKSLKDIEKAMDRDTFLEADEAKEFGIVDHVYDRRPALPGDDAPRDVSEGPTP</sequence>
<feature type="chain" id="PRO_0000252850" description="ATP-dependent Clp protease proteolytic subunit">
    <location>
        <begin position="1"/>
        <end position="216"/>
    </location>
</feature>
<feature type="region of interest" description="Disordered" evidence="2">
    <location>
        <begin position="197"/>
        <end position="216"/>
    </location>
</feature>
<feature type="active site" description="Nucleophile" evidence="1">
    <location>
        <position position="103"/>
    </location>
</feature>
<feature type="active site" evidence="1">
    <location>
        <position position="128"/>
    </location>
</feature>
<protein>
    <recommendedName>
        <fullName evidence="1">ATP-dependent Clp protease proteolytic subunit</fullName>
        <ecNumber evidence="1">3.4.21.92</ecNumber>
    </recommendedName>
    <alternativeName>
        <fullName evidence="1">Endopeptidase Clp</fullName>
    </alternativeName>
</protein>
<gene>
    <name evidence="1" type="primary">clpP</name>
    <name type="ordered locus">Sala_2742</name>
</gene>
<evidence type="ECO:0000255" key="1">
    <source>
        <dbReference type="HAMAP-Rule" id="MF_00444"/>
    </source>
</evidence>
<evidence type="ECO:0000256" key="2">
    <source>
        <dbReference type="SAM" id="MobiDB-lite"/>
    </source>
</evidence>
<proteinExistence type="inferred from homology"/>